<organism>
    <name type="scientific">Angiopteris evecta</name>
    <name type="common">Mule's foot fern</name>
    <name type="synonym">Polypodium evectum</name>
    <dbReference type="NCBI Taxonomy" id="13825"/>
    <lineage>
        <taxon>Eukaryota</taxon>
        <taxon>Viridiplantae</taxon>
        <taxon>Streptophyta</taxon>
        <taxon>Embryophyta</taxon>
        <taxon>Tracheophyta</taxon>
        <taxon>Polypodiopsida</taxon>
        <taxon>Marattiidae</taxon>
        <taxon>Marattiales</taxon>
        <taxon>Marattiaceae</taxon>
        <taxon>Angiopteris</taxon>
    </lineage>
</organism>
<name>NU4LC_ANGEV</name>
<evidence type="ECO:0000255" key="1">
    <source>
        <dbReference type="HAMAP-Rule" id="MF_01456"/>
    </source>
</evidence>
<dbReference type="EC" id="7.1.1.-" evidence="1"/>
<dbReference type="EMBL" id="DQ821119">
    <property type="protein sequence ID" value="ABG79652.1"/>
    <property type="molecule type" value="Genomic_DNA"/>
</dbReference>
<dbReference type="RefSeq" id="YP_001023753.1">
    <property type="nucleotide sequence ID" value="NC_008829.1"/>
</dbReference>
<dbReference type="SMR" id="A2T385"/>
<dbReference type="GeneID" id="4788132"/>
<dbReference type="GO" id="GO:0009535">
    <property type="term" value="C:chloroplast thylakoid membrane"/>
    <property type="evidence" value="ECO:0007669"/>
    <property type="project" value="UniProtKB-SubCell"/>
</dbReference>
<dbReference type="GO" id="GO:0030964">
    <property type="term" value="C:NADH dehydrogenase complex"/>
    <property type="evidence" value="ECO:0007669"/>
    <property type="project" value="TreeGrafter"/>
</dbReference>
<dbReference type="GO" id="GO:0016655">
    <property type="term" value="F:oxidoreductase activity, acting on NAD(P)H, quinone or similar compound as acceptor"/>
    <property type="evidence" value="ECO:0007669"/>
    <property type="project" value="UniProtKB-UniRule"/>
</dbReference>
<dbReference type="GO" id="GO:0048038">
    <property type="term" value="F:quinone binding"/>
    <property type="evidence" value="ECO:0007669"/>
    <property type="project" value="UniProtKB-KW"/>
</dbReference>
<dbReference type="GO" id="GO:0042773">
    <property type="term" value="P:ATP synthesis coupled electron transport"/>
    <property type="evidence" value="ECO:0007669"/>
    <property type="project" value="InterPro"/>
</dbReference>
<dbReference type="GO" id="GO:0019684">
    <property type="term" value="P:photosynthesis, light reaction"/>
    <property type="evidence" value="ECO:0007669"/>
    <property type="project" value="UniProtKB-UniRule"/>
</dbReference>
<dbReference type="FunFam" id="1.10.287.3510:FF:000001">
    <property type="entry name" value="NADH-quinone oxidoreductase subunit K"/>
    <property type="match status" value="1"/>
</dbReference>
<dbReference type="Gene3D" id="1.10.287.3510">
    <property type="match status" value="1"/>
</dbReference>
<dbReference type="HAMAP" id="MF_01456">
    <property type="entry name" value="NDH1_NuoK"/>
    <property type="match status" value="1"/>
</dbReference>
<dbReference type="InterPro" id="IPR001133">
    <property type="entry name" value="NADH_UbQ_OxRdtase_chain4L/K"/>
</dbReference>
<dbReference type="InterPro" id="IPR039428">
    <property type="entry name" value="NUOK/Mnh_C1-like"/>
</dbReference>
<dbReference type="NCBIfam" id="NF004320">
    <property type="entry name" value="PRK05715.1-2"/>
    <property type="match status" value="1"/>
</dbReference>
<dbReference type="NCBIfam" id="NF004322">
    <property type="entry name" value="PRK05715.1-4"/>
    <property type="match status" value="1"/>
</dbReference>
<dbReference type="PANTHER" id="PTHR11434:SF16">
    <property type="entry name" value="NADH-UBIQUINONE OXIDOREDUCTASE CHAIN 4L"/>
    <property type="match status" value="1"/>
</dbReference>
<dbReference type="PANTHER" id="PTHR11434">
    <property type="entry name" value="NADH-UBIQUINONE OXIDOREDUCTASE SUBUNIT ND4L"/>
    <property type="match status" value="1"/>
</dbReference>
<dbReference type="Pfam" id="PF00420">
    <property type="entry name" value="Oxidored_q2"/>
    <property type="match status" value="1"/>
</dbReference>
<sequence>MIENALILGAYLFCIGFYGLITSRNMIRALMCLELIFNAVNINFVTFSNYFDTQERKGEIFSISVIAIAAAEAAIGLSIILIIYRNRKSTRIDQFNLLKW</sequence>
<protein>
    <recommendedName>
        <fullName evidence="1">NAD(P)H-quinone oxidoreductase subunit 4L, chloroplastic</fullName>
        <ecNumber evidence="1">7.1.1.-</ecNumber>
    </recommendedName>
    <alternativeName>
        <fullName evidence="1">NAD(P)H dehydrogenase subunit 4L</fullName>
    </alternativeName>
    <alternativeName>
        <fullName evidence="1">NADH-plastoquinone oxidoreductase subunit 4L</fullName>
    </alternativeName>
</protein>
<gene>
    <name evidence="1" type="primary">ndhE</name>
</gene>
<comment type="function">
    <text evidence="1">NDH shuttles electrons from NAD(P)H:plastoquinone, via FMN and iron-sulfur (Fe-S) centers, to quinones in the photosynthetic chain and possibly in a chloroplast respiratory chain. The immediate electron acceptor for the enzyme in this species is believed to be plastoquinone. Couples the redox reaction to proton translocation, and thus conserves the redox energy in a proton gradient.</text>
</comment>
<comment type="catalytic activity">
    <reaction evidence="1">
        <text>a plastoquinone + NADH + (n+1) H(+)(in) = a plastoquinol + NAD(+) + n H(+)(out)</text>
        <dbReference type="Rhea" id="RHEA:42608"/>
        <dbReference type="Rhea" id="RHEA-COMP:9561"/>
        <dbReference type="Rhea" id="RHEA-COMP:9562"/>
        <dbReference type="ChEBI" id="CHEBI:15378"/>
        <dbReference type="ChEBI" id="CHEBI:17757"/>
        <dbReference type="ChEBI" id="CHEBI:57540"/>
        <dbReference type="ChEBI" id="CHEBI:57945"/>
        <dbReference type="ChEBI" id="CHEBI:62192"/>
    </reaction>
</comment>
<comment type="catalytic activity">
    <reaction evidence="1">
        <text>a plastoquinone + NADPH + (n+1) H(+)(in) = a plastoquinol + NADP(+) + n H(+)(out)</text>
        <dbReference type="Rhea" id="RHEA:42612"/>
        <dbReference type="Rhea" id="RHEA-COMP:9561"/>
        <dbReference type="Rhea" id="RHEA-COMP:9562"/>
        <dbReference type="ChEBI" id="CHEBI:15378"/>
        <dbReference type="ChEBI" id="CHEBI:17757"/>
        <dbReference type="ChEBI" id="CHEBI:57783"/>
        <dbReference type="ChEBI" id="CHEBI:58349"/>
        <dbReference type="ChEBI" id="CHEBI:62192"/>
    </reaction>
</comment>
<comment type="subunit">
    <text evidence="1">NDH is composed of at least 16 different subunits, 5 of which are encoded in the nucleus.</text>
</comment>
<comment type="subcellular location">
    <subcellularLocation>
        <location evidence="1">Plastid</location>
        <location evidence="1">Chloroplast thylakoid membrane</location>
        <topology evidence="1">Multi-pass membrane protein</topology>
    </subcellularLocation>
</comment>
<comment type="similarity">
    <text evidence="1">Belongs to the complex I subunit 4L family.</text>
</comment>
<keyword id="KW-0150">Chloroplast</keyword>
<keyword id="KW-0472">Membrane</keyword>
<keyword id="KW-0520">NAD</keyword>
<keyword id="KW-0521">NADP</keyword>
<keyword id="KW-0934">Plastid</keyword>
<keyword id="KW-0618">Plastoquinone</keyword>
<keyword id="KW-0874">Quinone</keyword>
<keyword id="KW-0793">Thylakoid</keyword>
<keyword id="KW-1278">Translocase</keyword>
<keyword id="KW-0812">Transmembrane</keyword>
<keyword id="KW-1133">Transmembrane helix</keyword>
<keyword id="KW-0813">Transport</keyword>
<geneLocation type="chloroplast"/>
<accession>A2T385</accession>
<proteinExistence type="inferred from homology"/>
<reference key="1">
    <citation type="journal article" date="2007" name="Am. Fern J.">
        <title>The complete plastid genome sequence of Angiopteris evecta (G. Forst.) Hoffm. (Marattiaceae).</title>
        <authorList>
            <person name="Roper J.M."/>
            <person name="Hansen S.K."/>
            <person name="Wolf P.G."/>
            <person name="Karol K.G."/>
            <person name="Mandoli D.F."/>
            <person name="Everett K.D.E."/>
            <person name="Kuehl J."/>
            <person name="Boore J.L."/>
        </authorList>
    </citation>
    <scope>NUCLEOTIDE SEQUENCE [LARGE SCALE GENOMIC DNA]</scope>
</reference>
<feature type="chain" id="PRO_0000360304" description="NAD(P)H-quinone oxidoreductase subunit 4L, chloroplastic">
    <location>
        <begin position="1"/>
        <end position="100"/>
    </location>
</feature>
<feature type="transmembrane region" description="Helical" evidence="1">
    <location>
        <begin position="1"/>
        <end position="21"/>
    </location>
</feature>
<feature type="transmembrane region" description="Helical" evidence="1">
    <location>
        <begin position="29"/>
        <end position="49"/>
    </location>
</feature>
<feature type="transmembrane region" description="Helical" evidence="1">
    <location>
        <begin position="63"/>
        <end position="83"/>
    </location>
</feature>